<proteinExistence type="evidence at protein level"/>
<name>CSG_METAC</name>
<keyword id="KW-0002">3D-structure</keyword>
<keyword id="KW-1003">Cell membrane</keyword>
<keyword id="KW-0134">Cell wall</keyword>
<keyword id="KW-0961">Cell wall biogenesis/degradation</keyword>
<keyword id="KW-0325">Glycoprotein</keyword>
<keyword id="KW-0472">Membrane</keyword>
<keyword id="KW-1185">Reference proteome</keyword>
<keyword id="KW-0701">S-layer</keyword>
<keyword id="KW-0964">Secreted</keyword>
<keyword id="KW-0732">Signal</keyword>
<keyword id="KW-0812">Transmembrane</keyword>
<keyword id="KW-1133">Transmembrane helix</keyword>
<evidence type="ECO:0000255" key="1"/>
<evidence type="ECO:0000255" key="2">
    <source>
        <dbReference type="PROSITE-ProRule" id="PRU00498"/>
    </source>
</evidence>
<evidence type="ECO:0000256" key="3">
    <source>
        <dbReference type="SAM" id="MobiDB-lite"/>
    </source>
</evidence>
<evidence type="ECO:0000269" key="4">
    <source>
    </source>
</evidence>
<evidence type="ECO:0000305" key="5"/>
<evidence type="ECO:0000312" key="6">
    <source>
        <dbReference type="EMBL" id="AAM04268.1"/>
    </source>
</evidence>
<evidence type="ECO:0007744" key="7">
    <source>
        <dbReference type="PDB" id="3U2G"/>
    </source>
</evidence>
<evidence type="ECO:0007744" key="8">
    <source>
        <dbReference type="PDB" id="3U2H"/>
    </source>
</evidence>
<evidence type="ECO:0007829" key="9">
    <source>
        <dbReference type="PDB" id="3U2G"/>
    </source>
</evidence>
<comment type="function">
    <text evidence="4">S-layer protein. The S-layer is a paracrystalline mono-layered assembly of proteins which coat the surface of the cell.</text>
</comment>
<comment type="interaction">
    <interactant intactId="EBI-15994209">
        <id>Q8TSG7</id>
    </interactant>
    <interactant intactId="EBI-15994209">
        <id>Q8TSG7</id>
        <label>MA_0829</label>
    </interactant>
    <organismsDiffer>false</organismsDiffer>
    <experiments>2</experiments>
</comment>
<comment type="subcellular location">
    <subcellularLocation>
        <location evidence="4">Secreted</location>
        <location evidence="4">Cell wall</location>
        <location evidence="4">S-layer</location>
    </subcellularLocation>
    <subcellularLocation>
        <location evidence="5">Cell membrane</location>
    </subcellularLocation>
</comment>
<comment type="PTM">
    <text evidence="4">Glycosylated.</text>
</comment>
<comment type="similarity">
    <text evidence="5">Belongs to the Methanosarcinales S-layer protein family.</text>
</comment>
<sequence length="671" mass="74394">MKRFAALSLAALMLLTVFASAASAVDVIEIRGPVYNGSDIDDIIDTYGDGTILTMDATDFAAFYYDIDDNVTTETLSIEDVPDTEGNVIGEGGLIYETTIQEVEYEYYNPDAGWDNYSLMGFFAEKYIPINPDKADKLSKLILDSDDKYTIRTGEMLDLGEGYAIEAKQVDVDGEKVWLEFTKDGEFVDDEIISVSTADDEANTWDVELDDIEDEDDVIVLKVHVNQVFQGAVDSIAQIEGLWLIDYANAMTIESDDEFGNLDDVSIDGDTLTITNEDTFTLTRDDEEEIGEGLYFATADTPSNVLRFYAMKEITDPGTYEIRGQVASGFGDQSWDASSFAGFYYDIDDNVSTETLTVSDLDGNVIPEGGLVYTTTIADVDFEYYNPDAGWDQYPVMGFFAEEYIPINPDKADKIAKLVLDSDDKYTIRTGEMLDLGEGYAIEAKQVDVDGEKVWLEFTKDGEFVDDEIISVSTADDEANTWDVELDDIEDEDDVVVLKVHVNQVFQGAVDSIAQIEGLWLIDYANAMTIESDDEFGNLDDVSIDGDTLKISNEDTFTLTRDSEEEIGEGMYFMIADTSSSDLRYYPYVEKTIGEEVSGEEETPEETPTGEVTETEGEEETPTEVTETPTEGEPAPEETETTESEGTTPGFGFMFGLVGLLAVVYLVRRNN</sequence>
<organism>
    <name type="scientific">Methanosarcina acetivorans (strain ATCC 35395 / DSM 2834 / JCM 12185 / C2A)</name>
    <dbReference type="NCBI Taxonomy" id="188937"/>
    <lineage>
        <taxon>Archaea</taxon>
        <taxon>Methanobacteriati</taxon>
        <taxon>Methanobacteriota</taxon>
        <taxon>Stenosarchaea group</taxon>
        <taxon>Methanomicrobia</taxon>
        <taxon>Methanosarcinales</taxon>
        <taxon>Methanosarcinaceae</taxon>
        <taxon>Methanosarcina</taxon>
    </lineage>
</organism>
<accession>Q8TSG7</accession>
<protein>
    <recommendedName>
        <fullName evidence="5">Major S-layer protein</fullName>
    </recommendedName>
    <alternativeName>
        <fullName evidence="5">Cell surface glycoprotein</fullName>
    </alternativeName>
</protein>
<feature type="signal peptide" evidence="4">
    <location>
        <begin position="1"/>
        <end position="24"/>
    </location>
</feature>
<feature type="chain" id="PRO_0000444298" description="Major S-layer protein">
    <location>
        <begin position="25"/>
        <end position="671"/>
    </location>
</feature>
<feature type="transmembrane region" description="Helical" evidence="1">
    <location>
        <begin position="647"/>
        <end position="667"/>
    </location>
</feature>
<feature type="region of interest" description="Disordered" evidence="3">
    <location>
        <begin position="594"/>
        <end position="650"/>
    </location>
</feature>
<feature type="compositionally biased region" description="Acidic residues" evidence="3">
    <location>
        <begin position="613"/>
        <end position="622"/>
    </location>
</feature>
<feature type="compositionally biased region" description="Low complexity" evidence="3">
    <location>
        <begin position="623"/>
        <end position="633"/>
    </location>
</feature>
<feature type="compositionally biased region" description="Acidic residues" evidence="3">
    <location>
        <begin position="634"/>
        <end position="643"/>
    </location>
</feature>
<feature type="glycosylation site" description="N-linked (GlcNAc...) asparagine" evidence="2">
    <location>
        <position position="36"/>
    </location>
</feature>
<feature type="glycosylation site" description="N-linked (GlcNAc...) asparagine" evidence="2">
    <location>
        <position position="70"/>
    </location>
</feature>
<feature type="glycosylation site" description="N-linked (GlcNAc...) asparagine" evidence="2">
    <location>
        <position position="116"/>
    </location>
</feature>
<feature type="glycosylation site" description="N-linked (GlcNAc...) asparagine" evidence="2">
    <location>
        <position position="350"/>
    </location>
</feature>
<feature type="strand" evidence="9">
    <location>
        <begin position="320"/>
        <end position="324"/>
    </location>
</feature>
<feature type="strand" evidence="9">
    <location>
        <begin position="327"/>
        <end position="331"/>
    </location>
</feature>
<feature type="strand" evidence="9">
    <location>
        <begin position="333"/>
        <end position="335"/>
    </location>
</feature>
<feature type="turn" evidence="9">
    <location>
        <begin position="337"/>
        <end position="339"/>
    </location>
</feature>
<feature type="turn" evidence="9">
    <location>
        <begin position="347"/>
        <end position="350"/>
    </location>
</feature>
<feature type="strand" evidence="9">
    <location>
        <begin position="354"/>
        <end position="358"/>
    </location>
</feature>
<feature type="strand" evidence="9">
    <location>
        <begin position="371"/>
        <end position="376"/>
    </location>
</feature>
<feature type="strand" evidence="9">
    <location>
        <begin position="378"/>
        <end position="386"/>
    </location>
</feature>
<feature type="helix" evidence="9">
    <location>
        <begin position="387"/>
        <end position="389"/>
    </location>
</feature>
<feature type="strand" evidence="9">
    <location>
        <begin position="391"/>
        <end position="399"/>
    </location>
</feature>
<feature type="strand" evidence="9">
    <location>
        <begin position="402"/>
        <end position="408"/>
    </location>
</feature>
<feature type="strand" evidence="9">
    <location>
        <begin position="414"/>
        <end position="416"/>
    </location>
</feature>
<feature type="strand" evidence="9">
    <location>
        <begin position="418"/>
        <end position="429"/>
    </location>
</feature>
<feature type="strand" evidence="9">
    <location>
        <begin position="433"/>
        <end position="437"/>
    </location>
</feature>
<feature type="strand" evidence="9">
    <location>
        <begin position="440"/>
        <end position="447"/>
    </location>
</feature>
<feature type="strand" evidence="9">
    <location>
        <begin position="451"/>
        <end position="460"/>
    </location>
</feature>
<feature type="strand" evidence="9">
    <location>
        <begin position="463"/>
        <end position="471"/>
    </location>
</feature>
<feature type="strand" evidence="9">
    <location>
        <begin position="473"/>
        <end position="475"/>
    </location>
</feature>
<feature type="helix" evidence="9">
    <location>
        <begin position="477"/>
        <end position="480"/>
    </location>
</feature>
<feature type="strand" evidence="9">
    <location>
        <begin position="481"/>
        <end position="487"/>
    </location>
</feature>
<feature type="strand" evidence="9">
    <location>
        <begin position="494"/>
        <end position="507"/>
    </location>
</feature>
<feature type="strand" evidence="9">
    <location>
        <begin position="512"/>
        <end position="522"/>
    </location>
</feature>
<feature type="helix" evidence="9">
    <location>
        <begin position="524"/>
        <end position="526"/>
    </location>
</feature>
<feature type="strand" evidence="9">
    <location>
        <begin position="541"/>
        <end position="545"/>
    </location>
</feature>
<feature type="strand" evidence="9">
    <location>
        <begin position="548"/>
        <end position="552"/>
    </location>
</feature>
<feature type="strand" evidence="9">
    <location>
        <begin position="563"/>
        <end position="568"/>
    </location>
</feature>
<feature type="strand" evidence="9">
    <location>
        <begin position="571"/>
        <end position="575"/>
    </location>
</feature>
<feature type="strand" evidence="9">
    <location>
        <begin position="584"/>
        <end position="591"/>
    </location>
</feature>
<gene>
    <name evidence="6" type="ordered locus">MA_0829</name>
</gene>
<reference key="1">
    <citation type="journal article" date="2002" name="Genome Res.">
        <title>The genome of Methanosarcina acetivorans reveals extensive metabolic and physiological diversity.</title>
        <authorList>
            <person name="Galagan J.E."/>
            <person name="Nusbaum C."/>
            <person name="Roy A."/>
            <person name="Endrizzi M.G."/>
            <person name="Macdonald P."/>
            <person name="FitzHugh W."/>
            <person name="Calvo S."/>
            <person name="Engels R."/>
            <person name="Smirnov S."/>
            <person name="Atnoor D."/>
            <person name="Brown A."/>
            <person name="Allen N."/>
            <person name="Naylor J."/>
            <person name="Stange-Thomann N."/>
            <person name="DeArellano K."/>
            <person name="Johnson R."/>
            <person name="Linton L."/>
            <person name="McEwan P."/>
            <person name="McKernan K."/>
            <person name="Talamas J."/>
            <person name="Tirrell A."/>
            <person name="Ye W."/>
            <person name="Zimmer A."/>
            <person name="Barber R.D."/>
            <person name="Cann I."/>
            <person name="Graham D.E."/>
            <person name="Grahame D.A."/>
            <person name="Guss A.M."/>
            <person name="Hedderich R."/>
            <person name="Ingram-Smith C."/>
            <person name="Kuettner H.C."/>
            <person name="Krzycki J.A."/>
            <person name="Leigh J.A."/>
            <person name="Li W."/>
            <person name="Liu J."/>
            <person name="Mukhopadhyay B."/>
            <person name="Reeve J.N."/>
            <person name="Smith K."/>
            <person name="Springer T.A."/>
            <person name="Umayam L.A."/>
            <person name="White O."/>
            <person name="White R.H."/>
            <person name="de Macario E.C."/>
            <person name="Ferry J.G."/>
            <person name="Jarrell K.F."/>
            <person name="Jing H."/>
            <person name="Macario A.J.L."/>
            <person name="Paulsen I.T."/>
            <person name="Pritchett M."/>
            <person name="Sowers K.R."/>
            <person name="Swanson R.V."/>
            <person name="Zinder S.H."/>
            <person name="Lander E."/>
            <person name="Metcalf W.W."/>
            <person name="Birren B."/>
        </authorList>
    </citation>
    <scope>NUCLEOTIDE SEQUENCE [LARGE SCALE GENOMIC DNA]</scope>
    <source>
        <strain>ATCC 35395 / DSM 2834 / JCM 12185 / C2A</strain>
    </source>
</reference>
<reference key="2">
    <citation type="journal article" date="2009" name="J. Proteome Res.">
        <title>S-layer, surface-accessible, and concanavalin A binding proteins of Methanosarcina acetivorans and Methanosarcina mazei.</title>
        <authorList>
            <person name="Francoleon D.R."/>
            <person name="Boontheung P."/>
            <person name="Yang Y."/>
            <person name="Kin U."/>
            <person name="Ytterberg A.J."/>
            <person name="Denny P.A."/>
            <person name="Denny P.C."/>
            <person name="Loo J.A."/>
            <person name="Gunsalus R.P."/>
            <person name="Loo R.R."/>
        </authorList>
    </citation>
    <scope>IDENTIFICATION BY MASS SPECTROMETRY</scope>
    <scope>SIGNAL PEPTIDE</scope>
    <scope>FUNCTION</scope>
    <scope>SUBCELLULAR LOCATION</scope>
    <scope>GLYCOSYLATION</scope>
    <source>
        <strain>ATCC 35395 / DSM 2834 / JCM 12185 / C2A</strain>
    </source>
</reference>
<reference evidence="7 8" key="3">
    <citation type="journal article" date="2012" name="Proc. Natl. Acad. Sci. U.S.A.">
        <title>Structure of the surface layer of the methanogenic archaean Methanosarcina acetivorans.</title>
        <authorList>
            <person name="Arbing M.A."/>
            <person name="Chan S."/>
            <person name="Shin A."/>
            <person name="Phan T."/>
            <person name="Ahn C.J."/>
            <person name="Rohlin L."/>
            <person name="Gunsalus R.P."/>
        </authorList>
    </citation>
    <scope>X-RAY CRYSTALLOGRAPHY (2.30 ANGSTROMS) OF 318-594</scope>
</reference>
<dbReference type="EMBL" id="AE010299">
    <property type="protein sequence ID" value="AAM04268.1"/>
    <property type="molecule type" value="Genomic_DNA"/>
</dbReference>
<dbReference type="RefSeq" id="WP_011020873.1">
    <property type="nucleotide sequence ID" value="NC_003552.1"/>
</dbReference>
<dbReference type="PDB" id="3U2G">
    <property type="method" value="X-ray"/>
    <property type="resolution" value="2.30 A"/>
    <property type="chains" value="A=318-594"/>
</dbReference>
<dbReference type="PDB" id="3U2H">
    <property type="method" value="X-ray"/>
    <property type="resolution" value="2.36 A"/>
    <property type="chains" value="A=318-594"/>
</dbReference>
<dbReference type="PDBsum" id="3U2G"/>
<dbReference type="PDBsum" id="3U2H"/>
<dbReference type="SMR" id="Q8TSG7"/>
<dbReference type="DIP" id="DIP-60054N"/>
<dbReference type="STRING" id="188937.MA_0829"/>
<dbReference type="EnsemblBacteria" id="AAM04268">
    <property type="protein sequence ID" value="AAM04268"/>
    <property type="gene ID" value="MA_0829"/>
</dbReference>
<dbReference type="GeneID" id="1472721"/>
<dbReference type="KEGG" id="mac:MA_0829"/>
<dbReference type="HOGENOM" id="CLU_014690_0_0_2"/>
<dbReference type="InParanoid" id="Q8TSG7"/>
<dbReference type="OrthoDB" id="137508at2157"/>
<dbReference type="PhylomeDB" id="Q8TSG7"/>
<dbReference type="EvolutionaryTrace" id="Q8TSG7"/>
<dbReference type="Proteomes" id="UP000002487">
    <property type="component" value="Chromosome"/>
</dbReference>
<dbReference type="GO" id="GO:0005576">
    <property type="term" value="C:extracellular region"/>
    <property type="evidence" value="ECO:0007669"/>
    <property type="project" value="UniProtKB-KW"/>
</dbReference>
<dbReference type="GO" id="GO:0005886">
    <property type="term" value="C:plasma membrane"/>
    <property type="evidence" value="ECO:0007669"/>
    <property type="project" value="UniProtKB-SubCell"/>
</dbReference>
<dbReference type="GO" id="GO:0030115">
    <property type="term" value="C:S-layer"/>
    <property type="evidence" value="ECO:0007669"/>
    <property type="project" value="UniProtKB-SubCell"/>
</dbReference>
<dbReference type="GO" id="GO:0042802">
    <property type="term" value="F:identical protein binding"/>
    <property type="evidence" value="ECO:0000353"/>
    <property type="project" value="IntAct"/>
</dbReference>
<dbReference type="GO" id="GO:0071555">
    <property type="term" value="P:cell wall organization"/>
    <property type="evidence" value="ECO:0007669"/>
    <property type="project" value="UniProtKB-KW"/>
</dbReference>
<dbReference type="Gene3D" id="2.60.40.4190">
    <property type="match status" value="2"/>
</dbReference>
<dbReference type="Gene3D" id="2.60.98.40">
    <property type="match status" value="2"/>
</dbReference>
<dbReference type="InterPro" id="IPR026371">
    <property type="entry name" value="PGF_CTERM"/>
</dbReference>
<dbReference type="InterPro" id="IPR006457">
    <property type="entry name" value="S_layer-rel_Mac"/>
</dbReference>
<dbReference type="NCBIfam" id="TIGR04126">
    <property type="entry name" value="PGF_CTERM"/>
    <property type="match status" value="1"/>
</dbReference>
<dbReference type="NCBIfam" id="TIGR01567">
    <property type="entry name" value="S_layer_rel_Mac"/>
    <property type="match status" value="2"/>
</dbReference>
<dbReference type="Pfam" id="PF18204">
    <property type="entry name" value="PGF-CTERM"/>
    <property type="match status" value="1"/>
</dbReference>
<dbReference type="Pfam" id="PF07752">
    <property type="entry name" value="S-layer"/>
    <property type="match status" value="2"/>
</dbReference>